<reference key="1">
    <citation type="journal article" date="2006" name="Nature">
        <title>Insights from the genome of the biotrophic fungal plant pathogen Ustilago maydis.</title>
        <authorList>
            <person name="Kaemper J."/>
            <person name="Kahmann R."/>
            <person name="Boelker M."/>
            <person name="Ma L.-J."/>
            <person name="Brefort T."/>
            <person name="Saville B.J."/>
            <person name="Banuett F."/>
            <person name="Kronstad J.W."/>
            <person name="Gold S.E."/>
            <person name="Mueller O."/>
            <person name="Perlin M.H."/>
            <person name="Woesten H.A.B."/>
            <person name="de Vries R."/>
            <person name="Ruiz-Herrera J."/>
            <person name="Reynaga-Pena C.G."/>
            <person name="Snetselaar K."/>
            <person name="McCann M."/>
            <person name="Perez-Martin J."/>
            <person name="Feldbruegge M."/>
            <person name="Basse C.W."/>
            <person name="Steinberg G."/>
            <person name="Ibeas J.I."/>
            <person name="Holloman W."/>
            <person name="Guzman P."/>
            <person name="Farman M.L."/>
            <person name="Stajich J.E."/>
            <person name="Sentandreu R."/>
            <person name="Gonzalez-Prieto J.M."/>
            <person name="Kennell J.C."/>
            <person name="Molina L."/>
            <person name="Schirawski J."/>
            <person name="Mendoza-Mendoza A."/>
            <person name="Greilinger D."/>
            <person name="Muench K."/>
            <person name="Roessel N."/>
            <person name="Scherer M."/>
            <person name="Vranes M."/>
            <person name="Ladendorf O."/>
            <person name="Vincon V."/>
            <person name="Fuchs U."/>
            <person name="Sandrock B."/>
            <person name="Meng S."/>
            <person name="Ho E.C.H."/>
            <person name="Cahill M.J."/>
            <person name="Boyce K.J."/>
            <person name="Klose J."/>
            <person name="Klosterman S.J."/>
            <person name="Deelstra H.J."/>
            <person name="Ortiz-Castellanos L."/>
            <person name="Li W."/>
            <person name="Sanchez-Alonso P."/>
            <person name="Schreier P.H."/>
            <person name="Haeuser-Hahn I."/>
            <person name="Vaupel M."/>
            <person name="Koopmann E."/>
            <person name="Friedrich G."/>
            <person name="Voss H."/>
            <person name="Schlueter T."/>
            <person name="Margolis J."/>
            <person name="Platt D."/>
            <person name="Swimmer C."/>
            <person name="Gnirke A."/>
            <person name="Chen F."/>
            <person name="Vysotskaia V."/>
            <person name="Mannhaupt G."/>
            <person name="Gueldener U."/>
            <person name="Muensterkoetter M."/>
            <person name="Haase D."/>
            <person name="Oesterheld M."/>
            <person name="Mewes H.-W."/>
            <person name="Mauceli E.W."/>
            <person name="DeCaprio D."/>
            <person name="Wade C.M."/>
            <person name="Butler J."/>
            <person name="Young S.K."/>
            <person name="Jaffe D.B."/>
            <person name="Calvo S.E."/>
            <person name="Nusbaum C."/>
            <person name="Galagan J.E."/>
            <person name="Birren B.W."/>
        </authorList>
    </citation>
    <scope>NUCLEOTIDE SEQUENCE [LARGE SCALE GENOMIC DNA]</scope>
    <source>
        <strain>DSM 14603 / FGSC 9021 / UM521</strain>
    </source>
</reference>
<reference key="2">
    <citation type="submission" date="2014-09" db="EMBL/GenBank/DDBJ databases">
        <authorList>
            <person name="Gueldener U."/>
            <person name="Muensterkoetter M."/>
            <person name="Walter M.C."/>
            <person name="Mannhaupt G."/>
            <person name="Kahmann R."/>
        </authorList>
    </citation>
    <scope>GENOME REANNOTATION</scope>
    <source>
        <strain>DSM 14603 / FGSC 9021 / UM521</strain>
    </source>
</reference>
<proteinExistence type="inferred from homology"/>
<feature type="chain" id="PRO_0000423951" description="Uncharacterized hydrolase UM10204">
    <location>
        <begin position="1"/>
        <end position="262"/>
    </location>
</feature>
<evidence type="ECO:0000305" key="1"/>
<keyword id="KW-0378">Hydrolase</keyword>
<keyword id="KW-1185">Reference proteome</keyword>
<name>YU204_MYCMD</name>
<organism>
    <name type="scientific">Mycosarcoma maydis</name>
    <name type="common">Corn smut fungus</name>
    <name type="synonym">Ustilago maydis</name>
    <dbReference type="NCBI Taxonomy" id="5270"/>
    <lineage>
        <taxon>Eukaryota</taxon>
        <taxon>Fungi</taxon>
        <taxon>Dikarya</taxon>
        <taxon>Basidiomycota</taxon>
        <taxon>Ustilaginomycotina</taxon>
        <taxon>Ustilaginomycetes</taxon>
        <taxon>Ustilaginales</taxon>
        <taxon>Ustilaginaceae</taxon>
        <taxon>Mycosarcoma</taxon>
    </lineage>
</organism>
<accession>P0CT29</accession>
<accession>A0A0D1DQW5</accession>
<accession>Q4P3F4</accession>
<protein>
    <recommendedName>
        <fullName>Uncharacterized hydrolase UM10204</fullName>
        <ecNumber>3.1.-.-</ecNumber>
    </recommendedName>
</protein>
<sequence length="262" mass="28749">MPTSPSREVAVDATKVELVSKPLLASAALNKFSGYHFNPSSSGVDSNLLILLHGLGDNDSGFFNLGQNLQKTLPQTAILTLQAPLKVPFLEGDHWMWYPAFDQFAELLTKPNPTVTVASVVALLDHLVGKCGWSAGSIHIFGFGQGATLALEVLISWSKSHSQPLGSIVSIHGSFISHPTISSSSTPVLHIYRSAREIPLDSTRWSSHRKSTSALTLHRLRGNEEDESMLKGSEWDSVMSFWSKFFRNRIKWELEGKVVPIG</sequence>
<gene>
    <name type="ORF">UMAG_10204</name>
</gene>
<comment type="similarity">
    <text evidence="1">Belongs to the AB hydrolase superfamily. AB hydrolase 2 family.</text>
</comment>
<dbReference type="EC" id="3.1.-.-"/>
<dbReference type="EMBL" id="CM003158">
    <property type="protein sequence ID" value="KIS66361.1"/>
    <property type="molecule type" value="Genomic_DNA"/>
</dbReference>
<dbReference type="RefSeq" id="XP_011392128.1">
    <property type="nucleotide sequence ID" value="XM_011393826.1"/>
</dbReference>
<dbReference type="SMR" id="P0CT29"/>
<dbReference type="FunCoup" id="P0CT29">
    <property type="interactions" value="249"/>
</dbReference>
<dbReference type="STRING" id="237631.P0CT29"/>
<dbReference type="ESTHER" id="ustma-q4p3f4">
    <property type="family name" value="LYsophospholipase_carboxylesterase"/>
</dbReference>
<dbReference type="EnsemblFungi" id="KIS66361">
    <property type="protein sequence ID" value="KIS66361"/>
    <property type="gene ID" value="UMAG_10204"/>
</dbReference>
<dbReference type="GeneID" id="23566267"/>
<dbReference type="KEGG" id="uma:UMAG_10204"/>
<dbReference type="VEuPathDB" id="FungiDB:UMAG_10204"/>
<dbReference type="InParanoid" id="P0CT29"/>
<dbReference type="OrthoDB" id="437457at2759"/>
<dbReference type="Proteomes" id="UP000000561">
    <property type="component" value="Chromosome 19"/>
</dbReference>
<dbReference type="GO" id="GO:0005737">
    <property type="term" value="C:cytoplasm"/>
    <property type="evidence" value="ECO:0000318"/>
    <property type="project" value="GO_Central"/>
</dbReference>
<dbReference type="GO" id="GO:0052689">
    <property type="term" value="F:carboxylic ester hydrolase activity"/>
    <property type="evidence" value="ECO:0000318"/>
    <property type="project" value="GO_Central"/>
</dbReference>
<dbReference type="GO" id="GO:0008474">
    <property type="term" value="F:palmitoyl-(protein) hydrolase activity"/>
    <property type="evidence" value="ECO:0000318"/>
    <property type="project" value="GO_Central"/>
</dbReference>
<dbReference type="Gene3D" id="3.40.50.1820">
    <property type="entry name" value="alpha/beta hydrolase"/>
    <property type="match status" value="1"/>
</dbReference>
<dbReference type="InterPro" id="IPR029058">
    <property type="entry name" value="AB_hydrolase_fold"/>
</dbReference>
<dbReference type="InterPro" id="IPR050565">
    <property type="entry name" value="LYPA1-2/EST-like"/>
</dbReference>
<dbReference type="InterPro" id="IPR003140">
    <property type="entry name" value="PLipase/COase/thioEstase"/>
</dbReference>
<dbReference type="PANTHER" id="PTHR10655">
    <property type="entry name" value="LYSOPHOSPHOLIPASE-RELATED"/>
    <property type="match status" value="1"/>
</dbReference>
<dbReference type="PANTHER" id="PTHR10655:SF67">
    <property type="entry name" value="PHOSPHOLIPASE_CARBOXYLESTERASE SUPERFAMILY (AFU_ORTHOLOGUE AFUA_5G09340)"/>
    <property type="match status" value="1"/>
</dbReference>
<dbReference type="Pfam" id="PF02230">
    <property type="entry name" value="Abhydrolase_2"/>
    <property type="match status" value="1"/>
</dbReference>
<dbReference type="SUPFAM" id="SSF53474">
    <property type="entry name" value="alpha/beta-Hydrolases"/>
    <property type="match status" value="1"/>
</dbReference>